<proteinExistence type="inferred from homology"/>
<dbReference type="EC" id="6.1.1.20"/>
<dbReference type="EMBL" id="AF222894">
    <property type="protein sequence ID" value="AAF30870.1"/>
    <property type="molecule type" value="Genomic_DNA"/>
</dbReference>
<dbReference type="RefSeq" id="WP_006689319.1">
    <property type="nucleotide sequence ID" value="NC_002162.1"/>
</dbReference>
<dbReference type="SMR" id="Q9PQ32"/>
<dbReference type="STRING" id="273119.UU458"/>
<dbReference type="EnsemblBacteria" id="AAF30870">
    <property type="protein sequence ID" value="AAF30870"/>
    <property type="gene ID" value="UU458"/>
</dbReference>
<dbReference type="GeneID" id="29672675"/>
<dbReference type="KEGG" id="uur:UU458"/>
<dbReference type="eggNOG" id="COG0016">
    <property type="taxonomic scope" value="Bacteria"/>
</dbReference>
<dbReference type="HOGENOM" id="CLU_025086_0_1_14"/>
<dbReference type="OrthoDB" id="9800719at2"/>
<dbReference type="Proteomes" id="UP000000423">
    <property type="component" value="Chromosome"/>
</dbReference>
<dbReference type="GO" id="GO:0005737">
    <property type="term" value="C:cytoplasm"/>
    <property type="evidence" value="ECO:0007669"/>
    <property type="project" value="UniProtKB-SubCell"/>
</dbReference>
<dbReference type="GO" id="GO:0005524">
    <property type="term" value="F:ATP binding"/>
    <property type="evidence" value="ECO:0007669"/>
    <property type="project" value="UniProtKB-UniRule"/>
</dbReference>
<dbReference type="GO" id="GO:0000287">
    <property type="term" value="F:magnesium ion binding"/>
    <property type="evidence" value="ECO:0007669"/>
    <property type="project" value="UniProtKB-UniRule"/>
</dbReference>
<dbReference type="GO" id="GO:0004826">
    <property type="term" value="F:phenylalanine-tRNA ligase activity"/>
    <property type="evidence" value="ECO:0007669"/>
    <property type="project" value="UniProtKB-UniRule"/>
</dbReference>
<dbReference type="GO" id="GO:0000049">
    <property type="term" value="F:tRNA binding"/>
    <property type="evidence" value="ECO:0007669"/>
    <property type="project" value="InterPro"/>
</dbReference>
<dbReference type="GO" id="GO:0006432">
    <property type="term" value="P:phenylalanyl-tRNA aminoacylation"/>
    <property type="evidence" value="ECO:0007669"/>
    <property type="project" value="UniProtKB-UniRule"/>
</dbReference>
<dbReference type="CDD" id="cd00496">
    <property type="entry name" value="PheRS_alpha_core"/>
    <property type="match status" value="1"/>
</dbReference>
<dbReference type="Gene3D" id="3.30.930.10">
    <property type="entry name" value="Bira Bifunctional Protein, Domain 2"/>
    <property type="match status" value="1"/>
</dbReference>
<dbReference type="HAMAP" id="MF_00281">
    <property type="entry name" value="Phe_tRNA_synth_alpha1"/>
    <property type="match status" value="1"/>
</dbReference>
<dbReference type="InterPro" id="IPR006195">
    <property type="entry name" value="aa-tRNA-synth_II"/>
</dbReference>
<dbReference type="InterPro" id="IPR045864">
    <property type="entry name" value="aa-tRNA-synth_II/BPL/LPL"/>
</dbReference>
<dbReference type="InterPro" id="IPR004529">
    <property type="entry name" value="Phe-tRNA-synth_IIc_asu"/>
</dbReference>
<dbReference type="InterPro" id="IPR022911">
    <property type="entry name" value="Phe_tRNA_ligase_alpha1_bac"/>
</dbReference>
<dbReference type="InterPro" id="IPR002319">
    <property type="entry name" value="Phenylalanyl-tRNA_Synthase"/>
</dbReference>
<dbReference type="NCBIfam" id="TIGR00468">
    <property type="entry name" value="pheS"/>
    <property type="match status" value="1"/>
</dbReference>
<dbReference type="PANTHER" id="PTHR11538:SF41">
    <property type="entry name" value="PHENYLALANINE--TRNA LIGASE, MITOCHONDRIAL"/>
    <property type="match status" value="1"/>
</dbReference>
<dbReference type="PANTHER" id="PTHR11538">
    <property type="entry name" value="PHENYLALANYL-TRNA SYNTHETASE"/>
    <property type="match status" value="1"/>
</dbReference>
<dbReference type="Pfam" id="PF01409">
    <property type="entry name" value="tRNA-synt_2d"/>
    <property type="match status" value="1"/>
</dbReference>
<dbReference type="SUPFAM" id="SSF55681">
    <property type="entry name" value="Class II aaRS and biotin synthetases"/>
    <property type="match status" value="1"/>
</dbReference>
<dbReference type="PROSITE" id="PS50862">
    <property type="entry name" value="AA_TRNA_LIGASE_II"/>
    <property type="match status" value="1"/>
</dbReference>
<organism>
    <name type="scientific">Ureaplasma parvum serovar 3 (strain ATCC 700970)</name>
    <dbReference type="NCBI Taxonomy" id="273119"/>
    <lineage>
        <taxon>Bacteria</taxon>
        <taxon>Bacillati</taxon>
        <taxon>Mycoplasmatota</taxon>
        <taxon>Mycoplasmoidales</taxon>
        <taxon>Mycoplasmoidaceae</taxon>
        <taxon>Ureaplasma</taxon>
    </lineage>
</organism>
<comment type="catalytic activity">
    <reaction>
        <text>tRNA(Phe) + L-phenylalanine + ATP = L-phenylalanyl-tRNA(Phe) + AMP + diphosphate + H(+)</text>
        <dbReference type="Rhea" id="RHEA:19413"/>
        <dbReference type="Rhea" id="RHEA-COMP:9668"/>
        <dbReference type="Rhea" id="RHEA-COMP:9699"/>
        <dbReference type="ChEBI" id="CHEBI:15378"/>
        <dbReference type="ChEBI" id="CHEBI:30616"/>
        <dbReference type="ChEBI" id="CHEBI:33019"/>
        <dbReference type="ChEBI" id="CHEBI:58095"/>
        <dbReference type="ChEBI" id="CHEBI:78442"/>
        <dbReference type="ChEBI" id="CHEBI:78531"/>
        <dbReference type="ChEBI" id="CHEBI:456215"/>
        <dbReference type="EC" id="6.1.1.20"/>
    </reaction>
</comment>
<comment type="cofactor">
    <cofactor evidence="1">
        <name>Mg(2+)</name>
        <dbReference type="ChEBI" id="CHEBI:18420"/>
    </cofactor>
    <text evidence="1">Binds 2 magnesium ions per tetramer.</text>
</comment>
<comment type="subunit">
    <text evidence="1">Tetramer of two alpha and two beta subunits.</text>
</comment>
<comment type="subcellular location">
    <subcellularLocation>
        <location evidence="1">Cytoplasm</location>
    </subcellularLocation>
</comment>
<comment type="similarity">
    <text evidence="2">Belongs to the class-II aminoacyl-tRNA synthetase family. Phe-tRNA synthetase alpha subunit type 1 subfamily.</text>
</comment>
<evidence type="ECO:0000250" key="1"/>
<evidence type="ECO:0000305" key="2"/>
<gene>
    <name type="primary">pheS</name>
    <name type="ordered locus">UU458</name>
</gene>
<sequence length="333" mass="38713">MDVINLIKNLKQILRTANNERHLIELKNIFVKQHLLPLYDELKKSANKKEMGLLINNFKQQIEFVTDQILKELNDKDDQVDLKKWTNKTLFAPFINNGHHHILNSIIDDIASFFKKLNFEIVSGSEVVSPIYNFDHLNIDENHPARASADSFFINSIKMLRTHCTTTTAQFLENNVNKDIRIMSFGNVYRKDDDDATHSHQFNQVDFVWVKEGLTVANLKWLIDSLIKYLFGQNLKTRYRLSFFPFTEPSFEVDVQCFKCDLKGCAVCKKSTWIEIMGTGMLHENVLKAANINDIRTGMAFGVGIDRIAMLKYEIDDIRYLYSNNFKFNAQIK</sequence>
<feature type="chain" id="PRO_0000126790" description="Phenylalanine--tRNA ligase alpha subunit">
    <location>
        <begin position="1"/>
        <end position="333"/>
    </location>
</feature>
<feature type="binding site" evidence="1">
    <location>
        <position position="248"/>
    </location>
    <ligand>
        <name>Mg(2+)</name>
        <dbReference type="ChEBI" id="CHEBI:18420"/>
        <note>shared with beta subunit</note>
    </ligand>
</feature>
<protein>
    <recommendedName>
        <fullName>Phenylalanine--tRNA ligase alpha subunit</fullName>
        <ecNumber>6.1.1.20</ecNumber>
    </recommendedName>
    <alternativeName>
        <fullName>Phenylalanyl-tRNA synthetase alpha subunit</fullName>
        <shortName>PheRS</shortName>
    </alternativeName>
</protein>
<reference key="1">
    <citation type="journal article" date="2000" name="Nature">
        <title>The complete sequence of the mucosal pathogen Ureaplasma urealyticum.</title>
        <authorList>
            <person name="Glass J.I."/>
            <person name="Lefkowitz E.J."/>
            <person name="Glass J.S."/>
            <person name="Heiner C.R."/>
            <person name="Chen E.Y."/>
            <person name="Cassell G.H."/>
        </authorList>
    </citation>
    <scope>NUCLEOTIDE SEQUENCE [LARGE SCALE GENOMIC DNA]</scope>
    <source>
        <strain>ATCC 700970</strain>
    </source>
</reference>
<name>SYFA_UREPA</name>
<keyword id="KW-0030">Aminoacyl-tRNA synthetase</keyword>
<keyword id="KW-0067">ATP-binding</keyword>
<keyword id="KW-0963">Cytoplasm</keyword>
<keyword id="KW-0436">Ligase</keyword>
<keyword id="KW-0460">Magnesium</keyword>
<keyword id="KW-0479">Metal-binding</keyword>
<keyword id="KW-0547">Nucleotide-binding</keyword>
<keyword id="KW-0648">Protein biosynthesis</keyword>
<keyword id="KW-1185">Reference proteome</keyword>
<accession>Q9PQ32</accession>